<comment type="function">
    <text evidence="4 5 9">CAHS proteins are cytosolic heat soluble proteins that seem to contribute to the anhydrobiosis in tardigrades, but their specific mechanisms are yet to be identified (PubMed:22937162, PubMed:33545053). It is possible that protection during anhydrobiosis might occur via the stabilization of vitrifying small molecules such as sugars, but not via the direct glass transition of CAHS proteins themselves (Probable).</text>
</comment>
<comment type="subcellular location">
    <subcellularLocation>
        <location evidence="4">Cytoplasm</location>
    </subcellularLocation>
    <subcellularLocation>
        <location evidence="4">Nucleus</location>
    </subcellularLocation>
    <text evidence="4">Is distributed mostly in the cytoplasm and weakly in the nucleus (PubMed:22937162).</text>
</comment>
<comment type="domain">
    <text evidence="8">CAHS proteins contain 2 repeats of 19-mer peptides designated as CAHS-motifs that comprise each two octapeptides connected by a tripeptide (PubMed:22937162).</text>
</comment>
<comment type="miscellaneous">
    <text evidence="1">Trehalose, a disaccharide essential for several organisms to survive drying, is detected at low levels or not at all in some tardigrade species, indicating that tardigrades possess potentially novel mechanisms for surviving desiccation involving tardigrade-specific intrinsically disordered proteins (TDPs) (By similarity).</text>
</comment>
<comment type="similarity">
    <text evidence="7">Belongs to the Cytosolic-abundant heat soluble protein (CAHS) family.</text>
</comment>
<organism>
    <name type="scientific">Ramazzottius varieornatus</name>
    <name type="common">Water bear</name>
    <name type="synonym">Tardigrade</name>
    <dbReference type="NCBI Taxonomy" id="947166"/>
    <lineage>
        <taxon>Eukaryota</taxon>
        <taxon>Metazoa</taxon>
        <taxon>Ecdysozoa</taxon>
        <taxon>Tardigrada</taxon>
        <taxon>Eutardigrada</taxon>
        <taxon>Parachela</taxon>
        <taxon>Hypsibioidea</taxon>
        <taxon>Ramazzottiidae</taxon>
        <taxon>Ramazzottius</taxon>
    </lineage>
</organism>
<evidence type="ECO:0000250" key="1">
    <source>
        <dbReference type="UniProtKB" id="P0CU44"/>
    </source>
</evidence>
<evidence type="ECO:0000255" key="2"/>
<evidence type="ECO:0000256" key="3">
    <source>
        <dbReference type="SAM" id="MobiDB-lite"/>
    </source>
</evidence>
<evidence type="ECO:0000269" key="4">
    <source>
    </source>
</evidence>
<evidence type="ECO:0000269" key="5">
    <source>
    </source>
</evidence>
<evidence type="ECO:0000303" key="6">
    <source>
    </source>
</evidence>
<evidence type="ECO:0000305" key="7"/>
<evidence type="ECO:0000305" key="8">
    <source>
    </source>
</evidence>
<evidence type="ECO:0000305" key="9">
    <source>
    </source>
</evidence>
<name>CAHS1_RAMVA</name>
<sequence>MPYEKHVEQTVVEKTEQPGHSSTHHAPAQRTVAREQEEVVHKEFTHTDIRVPHIDAPPPIIAASAVGLAEEIVSHGFQASAARISGASTEVDMRPSPKLAEEARRDAERYQKEHEMINRQAEATLQKKAEEYRHQTEAEAEKIRRELEKQHERDIQFRKDLIDQTIEKQKREVDLEAKMAKRELDREAQLAKEALERSRMATNVEVTLDTAAGHTVSGGTTVSSVDKVETVRERKHH</sequence>
<keyword id="KW-0175">Coiled coil</keyword>
<keyword id="KW-0963">Cytoplasm</keyword>
<keyword id="KW-0539">Nucleus</keyword>
<keyword id="KW-1185">Reference proteome</keyword>
<keyword id="KW-0677">Repeat</keyword>
<keyword id="KW-0346">Stress response</keyword>
<feature type="chain" id="PRO_0000440187" description="Cytosolic-abundant heat soluble protein 1">
    <location>
        <begin position="1"/>
        <end position="237"/>
    </location>
</feature>
<feature type="region of interest" description="Disordered" evidence="3">
    <location>
        <begin position="1"/>
        <end position="35"/>
    </location>
</feature>
<feature type="region of interest" description="Disordered" evidence="3">
    <location>
        <begin position="85"/>
        <end position="105"/>
    </location>
</feature>
<feature type="region of interest" description="CAHS motif 1" evidence="8">
    <location>
        <begin position="132"/>
        <end position="150"/>
    </location>
</feature>
<feature type="region of interest" description="CAHS motif 2" evidence="8">
    <location>
        <begin position="169"/>
        <end position="187"/>
    </location>
</feature>
<feature type="region of interest" description="Disordered" evidence="3">
    <location>
        <begin position="212"/>
        <end position="237"/>
    </location>
</feature>
<feature type="coiled-coil region" evidence="2">
    <location>
        <begin position="98"/>
        <end position="201"/>
    </location>
</feature>
<feature type="compositionally biased region" description="Basic and acidic residues" evidence="3">
    <location>
        <begin position="1"/>
        <end position="17"/>
    </location>
</feature>
<feature type="compositionally biased region" description="Basic and acidic residues" evidence="3">
    <location>
        <begin position="91"/>
        <end position="105"/>
    </location>
</feature>
<feature type="compositionally biased region" description="Basic and acidic residues" evidence="3">
    <location>
        <begin position="226"/>
        <end position="237"/>
    </location>
</feature>
<reference key="1">
    <citation type="journal article" date="2012" name="PLoS ONE">
        <title>Two novel heat-soluble protein families abundantly expressed in an anhydrobiotic tardigrade.</title>
        <authorList>
            <person name="Yamaguchi A."/>
            <person name="Tanaka S."/>
            <person name="Yamaguchi S."/>
            <person name="Kuwahara H."/>
            <person name="Takamura C."/>
            <person name="Imajoh-Ohmi S."/>
            <person name="Horikawa D.D."/>
            <person name="Toyoda A."/>
            <person name="Katayama T."/>
            <person name="Arakawa K."/>
            <person name="Fujiyama A."/>
            <person name="Kubo T."/>
            <person name="Kunieda T."/>
        </authorList>
    </citation>
    <scope>NUCLEOTIDE SEQUENCE [MRNA]</scope>
    <scope>IDENTIFICATION BY MASS SPECTROMETRY</scope>
    <scope>FUNCTION</scope>
    <scope>DOMAIN</scope>
    <scope>SUBCELLULAR LOCATION</scope>
    <source>
        <strain>YOKOZUNA-1</strain>
    </source>
</reference>
<reference key="2">
    <citation type="journal article" date="2016" name="Nat. Commun.">
        <title>Extremotolerant tardigrade genome and improved radiotolerance of human cultured cells by tardigrade-unique protein.</title>
        <authorList>
            <person name="Hashimoto T."/>
            <person name="Horikawa D.D."/>
            <person name="Saito Y."/>
            <person name="Kuwahara H."/>
            <person name="Kozuka-Hata H."/>
            <person name="Shin-I T."/>
            <person name="Minakuchi Y."/>
            <person name="Ohishi K."/>
            <person name="Motoyama A."/>
            <person name="Aizu T."/>
            <person name="Enomoto A."/>
            <person name="Kondo K."/>
            <person name="Tanaka S."/>
            <person name="Hara Y."/>
            <person name="Koshikawa S."/>
            <person name="Sagara H."/>
            <person name="Miura T."/>
            <person name="Yokobori S."/>
            <person name="Miyagawa K."/>
            <person name="Suzuki Y."/>
            <person name="Kubo T."/>
            <person name="Oyama M."/>
            <person name="Kohara Y."/>
            <person name="Fujiyama A."/>
            <person name="Arakawa K."/>
            <person name="Katayama T."/>
            <person name="Toyoda A."/>
            <person name="Kunieda T."/>
        </authorList>
    </citation>
    <scope>NUCLEOTIDE SEQUENCE [LARGE SCALE GENOMIC DNA]</scope>
    <source>
        <strain>YOKOZUNA-1</strain>
    </source>
</reference>
<reference key="3">
    <citation type="journal article" date="2021" name="Mol. Cell">
        <title>Reconsidering the 'glass transition' hypothesis of intrinsically unstructured CAHS proteins in desiccation tolerance of tardigrades.</title>
        <authorList>
            <person name="Arakawa K."/>
            <person name="Numata K."/>
        </authorList>
    </citation>
    <scope>FUNCTION</scope>
</reference>
<accession>J7M799</accession>
<protein>
    <recommendedName>
        <fullName evidence="6">Cytosolic-abundant heat soluble protein 1</fullName>
        <shortName evidence="6">CAHS1</shortName>
    </recommendedName>
    <alternativeName>
        <fullName evidence="7">Tardigrade-specific intrinsically disordered protein CAHS1</fullName>
        <shortName evidence="7">TDP CAHS1</shortName>
    </alternativeName>
</protein>
<proteinExistence type="evidence at protein level"/>
<dbReference type="EMBL" id="AB650499">
    <property type="protein sequence ID" value="BAM37958.1"/>
    <property type="molecule type" value="mRNA"/>
</dbReference>
<dbReference type="EMBL" id="BDGG01000001">
    <property type="protein sequence ID" value="GAU88202.1"/>
    <property type="molecule type" value="Genomic_DNA"/>
</dbReference>
<dbReference type="SMR" id="J7M799"/>
<dbReference type="Proteomes" id="UP000186922">
    <property type="component" value="Unassembled WGS sequence"/>
</dbReference>
<dbReference type="GO" id="GO:0005737">
    <property type="term" value="C:cytoplasm"/>
    <property type="evidence" value="ECO:0007669"/>
    <property type="project" value="UniProtKB-SubCell"/>
</dbReference>
<dbReference type="GO" id="GO:0005634">
    <property type="term" value="C:nucleus"/>
    <property type="evidence" value="ECO:0007669"/>
    <property type="project" value="UniProtKB-SubCell"/>
</dbReference>
<dbReference type="DisProt" id="DP01377"/>
<gene>
    <name evidence="6" type="primary">CAHS1</name>
    <name type="ORF">RvY_00944</name>
</gene>